<sequence length="376" mass="39954">MTVKLTIDCMGGDHGPSVTVPAAVNFVRSHADAHLMLVGIESAIRAQLKKLKAADNPALTVVSASEIVAMDDPVEVALRKKKDSSMRVALNRVKDDEAQACISAGNTGALMAVSRYVLKTLPGIERPAIAFALPNPTGYTTMLDLGANVDCEPQHLLQFAEMGHALVAAVEGKERPSIGLLNIGEEVIKGNDIIKRAGELLRTSTLNFRGNVEGNDIYKGTVDVIVCDGFVGNVALKTSEGLAQMLSDIIKEEFGRSWLTKVMAVLALPVLLRFKKRVDHRQYNGAALLGLRGLVIKSHGSADAYAFEWAIKRGYDAVKNGVLERLARAMEENAGSLEQAKRDAGGPGSASQMASPIAGPVSGQPAEPYSAQSSKA</sequence>
<feature type="chain" id="PRO_1000089885" description="Phosphate acyltransferase">
    <location>
        <begin position="1"/>
        <end position="376"/>
    </location>
</feature>
<feature type="region of interest" description="Disordered" evidence="2">
    <location>
        <begin position="334"/>
        <end position="376"/>
    </location>
</feature>
<name>PLSX_PARP8</name>
<evidence type="ECO:0000255" key="1">
    <source>
        <dbReference type="HAMAP-Rule" id="MF_00019"/>
    </source>
</evidence>
<evidence type="ECO:0000256" key="2">
    <source>
        <dbReference type="SAM" id="MobiDB-lite"/>
    </source>
</evidence>
<protein>
    <recommendedName>
        <fullName evidence="1">Phosphate acyltransferase</fullName>
        <ecNumber evidence="1">2.3.1.274</ecNumber>
    </recommendedName>
    <alternativeName>
        <fullName evidence="1">Acyl-ACP phosphotransacylase</fullName>
    </alternativeName>
    <alternativeName>
        <fullName evidence="1">Acyl-[acyl-carrier-protein]--phosphate acyltransferase</fullName>
    </alternativeName>
    <alternativeName>
        <fullName evidence="1">Phosphate-acyl-ACP acyltransferase</fullName>
    </alternativeName>
</protein>
<organism>
    <name type="scientific">Paraburkholderia phymatum (strain DSM 17167 / CIP 108236 / LMG 21445 / STM815)</name>
    <name type="common">Burkholderia phymatum</name>
    <dbReference type="NCBI Taxonomy" id="391038"/>
    <lineage>
        <taxon>Bacteria</taxon>
        <taxon>Pseudomonadati</taxon>
        <taxon>Pseudomonadota</taxon>
        <taxon>Betaproteobacteria</taxon>
        <taxon>Burkholderiales</taxon>
        <taxon>Burkholderiaceae</taxon>
        <taxon>Paraburkholderia</taxon>
    </lineage>
</organism>
<dbReference type="EC" id="2.3.1.274" evidence="1"/>
<dbReference type="EMBL" id="CP001043">
    <property type="protein sequence ID" value="ACC70016.1"/>
    <property type="molecule type" value="Genomic_DNA"/>
</dbReference>
<dbReference type="SMR" id="B2JFI8"/>
<dbReference type="STRING" id="391038.Bphy_0827"/>
<dbReference type="KEGG" id="bph:Bphy_0827"/>
<dbReference type="eggNOG" id="COG0416">
    <property type="taxonomic scope" value="Bacteria"/>
</dbReference>
<dbReference type="HOGENOM" id="CLU_039379_1_0_4"/>
<dbReference type="OrthoDB" id="9806408at2"/>
<dbReference type="UniPathway" id="UPA00085"/>
<dbReference type="Proteomes" id="UP000001192">
    <property type="component" value="Chromosome 1"/>
</dbReference>
<dbReference type="GO" id="GO:0005737">
    <property type="term" value="C:cytoplasm"/>
    <property type="evidence" value="ECO:0007669"/>
    <property type="project" value="UniProtKB-SubCell"/>
</dbReference>
<dbReference type="GO" id="GO:0043811">
    <property type="term" value="F:phosphate:acyl-[acyl carrier protein] acyltransferase activity"/>
    <property type="evidence" value="ECO:0007669"/>
    <property type="project" value="UniProtKB-UniRule"/>
</dbReference>
<dbReference type="GO" id="GO:0006633">
    <property type="term" value="P:fatty acid biosynthetic process"/>
    <property type="evidence" value="ECO:0007669"/>
    <property type="project" value="UniProtKB-UniRule"/>
</dbReference>
<dbReference type="GO" id="GO:0008654">
    <property type="term" value="P:phospholipid biosynthetic process"/>
    <property type="evidence" value="ECO:0007669"/>
    <property type="project" value="UniProtKB-KW"/>
</dbReference>
<dbReference type="Gene3D" id="3.40.718.10">
    <property type="entry name" value="Isopropylmalate Dehydrogenase"/>
    <property type="match status" value="1"/>
</dbReference>
<dbReference type="HAMAP" id="MF_00019">
    <property type="entry name" value="PlsX"/>
    <property type="match status" value="1"/>
</dbReference>
<dbReference type="InterPro" id="IPR003664">
    <property type="entry name" value="FA_synthesis"/>
</dbReference>
<dbReference type="InterPro" id="IPR012281">
    <property type="entry name" value="Phospholipid_synth_PlsX-like"/>
</dbReference>
<dbReference type="NCBIfam" id="TIGR00182">
    <property type="entry name" value="plsX"/>
    <property type="match status" value="1"/>
</dbReference>
<dbReference type="PANTHER" id="PTHR30100">
    <property type="entry name" value="FATTY ACID/PHOSPHOLIPID SYNTHESIS PROTEIN PLSX"/>
    <property type="match status" value="1"/>
</dbReference>
<dbReference type="PANTHER" id="PTHR30100:SF1">
    <property type="entry name" value="PHOSPHATE ACYLTRANSFERASE"/>
    <property type="match status" value="1"/>
</dbReference>
<dbReference type="Pfam" id="PF02504">
    <property type="entry name" value="FA_synthesis"/>
    <property type="match status" value="1"/>
</dbReference>
<dbReference type="PIRSF" id="PIRSF002465">
    <property type="entry name" value="Phsphlp_syn_PlsX"/>
    <property type="match status" value="1"/>
</dbReference>
<dbReference type="SUPFAM" id="SSF53659">
    <property type="entry name" value="Isocitrate/Isopropylmalate dehydrogenase-like"/>
    <property type="match status" value="1"/>
</dbReference>
<reference key="1">
    <citation type="journal article" date="2014" name="Stand. Genomic Sci.">
        <title>Complete genome sequence of Burkholderia phymatum STM815(T), a broad host range and efficient nitrogen-fixing symbiont of Mimosa species.</title>
        <authorList>
            <person name="Moulin L."/>
            <person name="Klonowska A."/>
            <person name="Caroline B."/>
            <person name="Booth K."/>
            <person name="Vriezen J.A."/>
            <person name="Melkonian R."/>
            <person name="James E.K."/>
            <person name="Young J.P."/>
            <person name="Bena G."/>
            <person name="Hauser L."/>
            <person name="Land M."/>
            <person name="Kyrpides N."/>
            <person name="Bruce D."/>
            <person name="Chain P."/>
            <person name="Copeland A."/>
            <person name="Pitluck S."/>
            <person name="Woyke T."/>
            <person name="Lizotte-Waniewski M."/>
            <person name="Bristow J."/>
            <person name="Riley M."/>
        </authorList>
    </citation>
    <scope>NUCLEOTIDE SEQUENCE [LARGE SCALE GENOMIC DNA]</scope>
    <source>
        <strain>DSM 17167 / CIP 108236 / LMG 21445 / STM815</strain>
    </source>
</reference>
<keyword id="KW-0963">Cytoplasm</keyword>
<keyword id="KW-0444">Lipid biosynthesis</keyword>
<keyword id="KW-0443">Lipid metabolism</keyword>
<keyword id="KW-0594">Phospholipid biosynthesis</keyword>
<keyword id="KW-1208">Phospholipid metabolism</keyword>
<keyword id="KW-1185">Reference proteome</keyword>
<keyword id="KW-0808">Transferase</keyword>
<accession>B2JFI8</accession>
<proteinExistence type="inferred from homology"/>
<comment type="function">
    <text evidence="1">Catalyzes the reversible formation of acyl-phosphate (acyl-PO(4)) from acyl-[acyl-carrier-protein] (acyl-ACP). This enzyme utilizes acyl-ACP as fatty acyl donor, but not acyl-CoA.</text>
</comment>
<comment type="catalytic activity">
    <reaction evidence="1">
        <text>a fatty acyl-[ACP] + phosphate = an acyl phosphate + holo-[ACP]</text>
        <dbReference type="Rhea" id="RHEA:42292"/>
        <dbReference type="Rhea" id="RHEA-COMP:9685"/>
        <dbReference type="Rhea" id="RHEA-COMP:14125"/>
        <dbReference type="ChEBI" id="CHEBI:43474"/>
        <dbReference type="ChEBI" id="CHEBI:59918"/>
        <dbReference type="ChEBI" id="CHEBI:64479"/>
        <dbReference type="ChEBI" id="CHEBI:138651"/>
        <dbReference type="EC" id="2.3.1.274"/>
    </reaction>
</comment>
<comment type="pathway">
    <text evidence="1">Lipid metabolism; phospholipid metabolism.</text>
</comment>
<comment type="subunit">
    <text evidence="1">Homodimer. Probably interacts with PlsY.</text>
</comment>
<comment type="subcellular location">
    <subcellularLocation>
        <location evidence="1">Cytoplasm</location>
    </subcellularLocation>
    <text evidence="1">Associated with the membrane possibly through PlsY.</text>
</comment>
<comment type="similarity">
    <text evidence="1">Belongs to the PlsX family.</text>
</comment>
<gene>
    <name evidence="1" type="primary">plsX</name>
    <name type="ordered locus">Bphy_0827</name>
</gene>